<gene>
    <name evidence="1" type="primary">cbiT</name>
    <name type="ordered locus">PAE0347</name>
</gene>
<feature type="chain" id="PRO_0000134942" description="Probable cobalt-precorrin-6B C(15)-methyltransferase (decarboxylating)">
    <location>
        <begin position="1"/>
        <end position="196"/>
    </location>
</feature>
<feature type="binding site" evidence="1">
    <location>
        <position position="24"/>
    </location>
    <ligand>
        <name>S-adenosyl-L-methionine</name>
        <dbReference type="ChEBI" id="CHEBI:59789"/>
    </ligand>
</feature>
<feature type="binding site" evidence="1">
    <location>
        <begin position="48"/>
        <end position="52"/>
    </location>
    <ligand>
        <name>S-adenosyl-L-methionine</name>
        <dbReference type="ChEBI" id="CHEBI:59789"/>
    </ligand>
</feature>
<feature type="binding site" evidence="1">
    <location>
        <position position="72"/>
    </location>
    <ligand>
        <name>S-adenosyl-L-methionine</name>
        <dbReference type="ChEBI" id="CHEBI:59789"/>
    </ligand>
</feature>
<feature type="binding site" evidence="1">
    <location>
        <position position="101"/>
    </location>
    <ligand>
        <name>S-adenosyl-L-methionine</name>
        <dbReference type="ChEBI" id="CHEBI:59789"/>
    </ligand>
</feature>
<comment type="function">
    <text evidence="1">Catalyzes the methylation of C-15 in cobalt-precorrin-6B followed by the decarboxylation of C-12 to form cobalt-precorrin-7.</text>
</comment>
<comment type="catalytic activity">
    <reaction evidence="1">
        <text>Co-precorrin-6B + S-adenosyl-L-methionine = Co-precorrin-7 + S-adenosyl-L-homocysteine + CO2</text>
        <dbReference type="Rhea" id="RHEA:36067"/>
        <dbReference type="ChEBI" id="CHEBI:16526"/>
        <dbReference type="ChEBI" id="CHEBI:57856"/>
        <dbReference type="ChEBI" id="CHEBI:59789"/>
        <dbReference type="ChEBI" id="CHEBI:70791"/>
        <dbReference type="ChEBI" id="CHEBI:72780"/>
        <dbReference type="EC" id="2.1.1.196"/>
    </reaction>
</comment>
<comment type="pathway">
    <text evidence="1">Cofactor biosynthesis; adenosylcobalamin biosynthesis; cob(II)yrinate a,c-diamide from sirohydrochlorin (anaerobic route): step 8/10.</text>
</comment>
<comment type="similarity">
    <text evidence="1">Belongs to the methyltransferase superfamily. Archaeal-type CbiT family.</text>
</comment>
<keyword id="KW-0169">Cobalamin biosynthesis</keyword>
<keyword id="KW-0489">Methyltransferase</keyword>
<keyword id="KW-1185">Reference proteome</keyword>
<keyword id="KW-0949">S-adenosyl-L-methionine</keyword>
<keyword id="KW-0808">Transferase</keyword>
<name>CBIT_PYRAE</name>
<accession>Q8ZZA9</accession>
<protein>
    <recommendedName>
        <fullName evidence="1">Probable cobalt-precorrin-6B C(15)-methyltransferase (decarboxylating)</fullName>
        <ecNumber evidence="1">2.1.1.196</ecNumber>
    </recommendedName>
</protein>
<dbReference type="EC" id="2.1.1.196" evidence="1"/>
<dbReference type="EMBL" id="AE009441">
    <property type="protein sequence ID" value="AAL62732.1"/>
    <property type="molecule type" value="Genomic_DNA"/>
</dbReference>
<dbReference type="SMR" id="Q8ZZA9"/>
<dbReference type="FunCoup" id="Q8ZZA9">
    <property type="interactions" value="72"/>
</dbReference>
<dbReference type="STRING" id="178306.PAE0347"/>
<dbReference type="EnsemblBacteria" id="AAL62732">
    <property type="protein sequence ID" value="AAL62732"/>
    <property type="gene ID" value="PAE0347"/>
</dbReference>
<dbReference type="KEGG" id="pai:PAE0347"/>
<dbReference type="PATRIC" id="fig|178306.9.peg.265"/>
<dbReference type="eggNOG" id="arCOG00977">
    <property type="taxonomic scope" value="Archaea"/>
</dbReference>
<dbReference type="HOGENOM" id="CLU_094143_0_0_2"/>
<dbReference type="InParanoid" id="Q8ZZA9"/>
<dbReference type="UniPathway" id="UPA00148">
    <property type="reaction ID" value="UER00229"/>
</dbReference>
<dbReference type="Proteomes" id="UP000002439">
    <property type="component" value="Chromosome"/>
</dbReference>
<dbReference type="GO" id="GO:0043776">
    <property type="term" value="F:cobalt-precorrin-6B C5-methyltransferase activity"/>
    <property type="evidence" value="ECO:0007669"/>
    <property type="project" value="RHEA"/>
</dbReference>
<dbReference type="GO" id="GO:0008276">
    <property type="term" value="F:protein methyltransferase activity"/>
    <property type="evidence" value="ECO:0007669"/>
    <property type="project" value="InterPro"/>
</dbReference>
<dbReference type="GO" id="GO:0019251">
    <property type="term" value="P:anaerobic cobalamin biosynthetic process"/>
    <property type="evidence" value="ECO:0007669"/>
    <property type="project" value="UniProtKB-UniRule"/>
</dbReference>
<dbReference type="GO" id="GO:0032259">
    <property type="term" value="P:methylation"/>
    <property type="evidence" value="ECO:0007669"/>
    <property type="project" value="UniProtKB-KW"/>
</dbReference>
<dbReference type="CDD" id="cd02440">
    <property type="entry name" value="AdoMet_MTases"/>
    <property type="match status" value="1"/>
</dbReference>
<dbReference type="Gene3D" id="3.40.50.150">
    <property type="entry name" value="Vaccinia Virus protein VP39"/>
    <property type="match status" value="1"/>
</dbReference>
<dbReference type="HAMAP" id="MF_00786">
    <property type="entry name" value="CbiT"/>
    <property type="match status" value="1"/>
</dbReference>
<dbReference type="InterPro" id="IPR023475">
    <property type="entry name" value="CbiT"/>
</dbReference>
<dbReference type="InterPro" id="IPR014008">
    <property type="entry name" value="Cbl_synth_MTase_CbiT"/>
</dbReference>
<dbReference type="InterPro" id="IPR050714">
    <property type="entry name" value="Cobalamin_biosynth_MTase"/>
</dbReference>
<dbReference type="InterPro" id="IPR025714">
    <property type="entry name" value="Methyltranfer_dom"/>
</dbReference>
<dbReference type="InterPro" id="IPR029063">
    <property type="entry name" value="SAM-dependent_MTases_sf"/>
</dbReference>
<dbReference type="NCBIfam" id="TIGR02469">
    <property type="entry name" value="CbiT"/>
    <property type="match status" value="1"/>
</dbReference>
<dbReference type="NCBIfam" id="NF001556">
    <property type="entry name" value="PRK00377.1"/>
    <property type="match status" value="1"/>
</dbReference>
<dbReference type="PANTHER" id="PTHR43182">
    <property type="entry name" value="COBALT-PRECORRIN-6B C(15)-METHYLTRANSFERASE (DECARBOXYLATING)"/>
    <property type="match status" value="1"/>
</dbReference>
<dbReference type="PANTHER" id="PTHR43182:SF1">
    <property type="entry name" value="COBALT-PRECORRIN-7 C(5)-METHYLTRANSFERASE"/>
    <property type="match status" value="1"/>
</dbReference>
<dbReference type="Pfam" id="PF13847">
    <property type="entry name" value="Methyltransf_31"/>
    <property type="match status" value="1"/>
</dbReference>
<dbReference type="SUPFAM" id="SSF53335">
    <property type="entry name" value="S-adenosyl-L-methionine-dependent methyltransferases"/>
    <property type="match status" value="1"/>
</dbReference>
<proteinExistence type="inferred from homology"/>
<sequence length="196" mass="20910">MSWPYATPGIPDEEFIRAEGVPMTKAEIRALALSKLRLIKGGTLVDVGCGTGTISVEAALIMGEGSKVYAIDKDPLAVEITKKNAAKFGVGDRLIVAEGDALELLPKLPRSNRYFLGGGGRELPMLFQTALELAGTGGVIVADVITLESLRLALDFLENAGVKYEIAQVYIARGRRLGGYTILSPLNPVYIITAYA</sequence>
<reference key="1">
    <citation type="journal article" date="2002" name="Proc. Natl. Acad. Sci. U.S.A.">
        <title>Genome sequence of the hyperthermophilic crenarchaeon Pyrobaculum aerophilum.</title>
        <authorList>
            <person name="Fitz-Gibbon S.T."/>
            <person name="Ladner H."/>
            <person name="Kim U.-J."/>
            <person name="Stetter K.O."/>
            <person name="Simon M.I."/>
            <person name="Miller J.H."/>
        </authorList>
    </citation>
    <scope>NUCLEOTIDE SEQUENCE [LARGE SCALE GENOMIC DNA]</scope>
    <source>
        <strain>ATCC 51768 / DSM 7523 / JCM 9630 / CIP 104966 / NBRC 100827 / IM2</strain>
    </source>
</reference>
<evidence type="ECO:0000255" key="1">
    <source>
        <dbReference type="HAMAP-Rule" id="MF_00786"/>
    </source>
</evidence>
<organism>
    <name type="scientific">Pyrobaculum aerophilum (strain ATCC 51768 / DSM 7523 / JCM 9630 / CIP 104966 / NBRC 100827 / IM2)</name>
    <dbReference type="NCBI Taxonomy" id="178306"/>
    <lineage>
        <taxon>Archaea</taxon>
        <taxon>Thermoproteota</taxon>
        <taxon>Thermoprotei</taxon>
        <taxon>Thermoproteales</taxon>
        <taxon>Thermoproteaceae</taxon>
        <taxon>Pyrobaculum</taxon>
    </lineage>
</organism>